<name>SYD_XYLFM</name>
<comment type="function">
    <text evidence="1">Catalyzes the attachment of L-aspartate to tRNA(Asp) in a two-step reaction: L-aspartate is first activated by ATP to form Asp-AMP and then transferred to the acceptor end of tRNA(Asp).</text>
</comment>
<comment type="catalytic activity">
    <reaction evidence="1">
        <text>tRNA(Asp) + L-aspartate + ATP = L-aspartyl-tRNA(Asp) + AMP + diphosphate</text>
        <dbReference type="Rhea" id="RHEA:19649"/>
        <dbReference type="Rhea" id="RHEA-COMP:9660"/>
        <dbReference type="Rhea" id="RHEA-COMP:9678"/>
        <dbReference type="ChEBI" id="CHEBI:29991"/>
        <dbReference type="ChEBI" id="CHEBI:30616"/>
        <dbReference type="ChEBI" id="CHEBI:33019"/>
        <dbReference type="ChEBI" id="CHEBI:78442"/>
        <dbReference type="ChEBI" id="CHEBI:78516"/>
        <dbReference type="ChEBI" id="CHEBI:456215"/>
        <dbReference type="EC" id="6.1.1.12"/>
    </reaction>
</comment>
<comment type="subunit">
    <text evidence="1">Homodimer.</text>
</comment>
<comment type="subcellular location">
    <subcellularLocation>
        <location evidence="1">Cytoplasm</location>
    </subcellularLocation>
</comment>
<comment type="similarity">
    <text evidence="1">Belongs to the class-II aminoacyl-tRNA synthetase family. Type 1 subfamily.</text>
</comment>
<keyword id="KW-0030">Aminoacyl-tRNA synthetase</keyword>
<keyword id="KW-0067">ATP-binding</keyword>
<keyword id="KW-0963">Cytoplasm</keyword>
<keyword id="KW-0436">Ligase</keyword>
<keyword id="KW-0547">Nucleotide-binding</keyword>
<keyword id="KW-0648">Protein biosynthesis</keyword>
<feature type="chain" id="PRO_1000091065" description="Aspartate--tRNA ligase">
    <location>
        <begin position="1"/>
        <end position="589"/>
    </location>
</feature>
<feature type="region of interest" description="Aspartate" evidence="1">
    <location>
        <begin position="198"/>
        <end position="201"/>
    </location>
</feature>
<feature type="binding site" evidence="1">
    <location>
        <position position="174"/>
    </location>
    <ligand>
        <name>L-aspartate</name>
        <dbReference type="ChEBI" id="CHEBI:29991"/>
    </ligand>
</feature>
<feature type="binding site" evidence="1">
    <location>
        <begin position="220"/>
        <end position="222"/>
    </location>
    <ligand>
        <name>ATP</name>
        <dbReference type="ChEBI" id="CHEBI:30616"/>
    </ligand>
</feature>
<feature type="binding site" evidence="1">
    <location>
        <position position="220"/>
    </location>
    <ligand>
        <name>L-aspartate</name>
        <dbReference type="ChEBI" id="CHEBI:29991"/>
    </ligand>
</feature>
<feature type="binding site" evidence="1">
    <location>
        <position position="229"/>
    </location>
    <ligand>
        <name>ATP</name>
        <dbReference type="ChEBI" id="CHEBI:30616"/>
    </ligand>
</feature>
<feature type="binding site" evidence="1">
    <location>
        <position position="448"/>
    </location>
    <ligand>
        <name>L-aspartate</name>
        <dbReference type="ChEBI" id="CHEBI:29991"/>
    </ligand>
</feature>
<feature type="binding site" evidence="1">
    <location>
        <position position="483"/>
    </location>
    <ligand>
        <name>ATP</name>
        <dbReference type="ChEBI" id="CHEBI:30616"/>
    </ligand>
</feature>
<feature type="binding site" evidence="1">
    <location>
        <position position="490"/>
    </location>
    <ligand>
        <name>L-aspartate</name>
        <dbReference type="ChEBI" id="CHEBI:29991"/>
    </ligand>
</feature>
<feature type="binding site" evidence="1">
    <location>
        <begin position="535"/>
        <end position="538"/>
    </location>
    <ligand>
        <name>ATP</name>
        <dbReference type="ChEBI" id="CHEBI:30616"/>
    </ligand>
</feature>
<organism>
    <name type="scientific">Xylella fastidiosa (strain M12)</name>
    <dbReference type="NCBI Taxonomy" id="405440"/>
    <lineage>
        <taxon>Bacteria</taxon>
        <taxon>Pseudomonadati</taxon>
        <taxon>Pseudomonadota</taxon>
        <taxon>Gammaproteobacteria</taxon>
        <taxon>Lysobacterales</taxon>
        <taxon>Lysobacteraceae</taxon>
        <taxon>Xylella</taxon>
    </lineage>
</organism>
<reference key="1">
    <citation type="journal article" date="2010" name="J. Bacteriol.">
        <title>Whole genome sequences of two Xylella fastidiosa strains (M12 and M23) causing almond leaf scorch disease in California.</title>
        <authorList>
            <person name="Chen J."/>
            <person name="Xie G."/>
            <person name="Han S."/>
            <person name="Chertkov O."/>
            <person name="Sims D."/>
            <person name="Civerolo E.L."/>
        </authorList>
    </citation>
    <scope>NUCLEOTIDE SEQUENCE [LARGE SCALE GENOMIC DNA]</scope>
    <source>
        <strain>M12</strain>
    </source>
</reference>
<protein>
    <recommendedName>
        <fullName evidence="1">Aspartate--tRNA ligase</fullName>
        <ecNumber evidence="1">6.1.1.12</ecNumber>
    </recommendedName>
    <alternativeName>
        <fullName evidence="1">Aspartyl-tRNA synthetase</fullName>
        <shortName evidence="1">AspRS</shortName>
    </alternativeName>
</protein>
<accession>B0U2I5</accession>
<dbReference type="EC" id="6.1.1.12" evidence="1"/>
<dbReference type="EMBL" id="CP000941">
    <property type="protein sequence ID" value="ACA12064.1"/>
    <property type="molecule type" value="Genomic_DNA"/>
</dbReference>
<dbReference type="RefSeq" id="WP_012337842.1">
    <property type="nucleotide sequence ID" value="NC_010513.1"/>
</dbReference>
<dbReference type="SMR" id="B0U2I5"/>
<dbReference type="KEGG" id="xfm:Xfasm12_1108"/>
<dbReference type="HOGENOM" id="CLU_014330_3_2_6"/>
<dbReference type="GO" id="GO:0005737">
    <property type="term" value="C:cytoplasm"/>
    <property type="evidence" value="ECO:0007669"/>
    <property type="project" value="UniProtKB-SubCell"/>
</dbReference>
<dbReference type="GO" id="GO:0004815">
    <property type="term" value="F:aspartate-tRNA ligase activity"/>
    <property type="evidence" value="ECO:0007669"/>
    <property type="project" value="UniProtKB-UniRule"/>
</dbReference>
<dbReference type="GO" id="GO:0005524">
    <property type="term" value="F:ATP binding"/>
    <property type="evidence" value="ECO:0007669"/>
    <property type="project" value="UniProtKB-UniRule"/>
</dbReference>
<dbReference type="GO" id="GO:0003676">
    <property type="term" value="F:nucleic acid binding"/>
    <property type="evidence" value="ECO:0007669"/>
    <property type="project" value="InterPro"/>
</dbReference>
<dbReference type="GO" id="GO:0006422">
    <property type="term" value="P:aspartyl-tRNA aminoacylation"/>
    <property type="evidence" value="ECO:0007669"/>
    <property type="project" value="UniProtKB-UniRule"/>
</dbReference>
<dbReference type="CDD" id="cd00777">
    <property type="entry name" value="AspRS_core"/>
    <property type="match status" value="1"/>
</dbReference>
<dbReference type="CDD" id="cd04317">
    <property type="entry name" value="EcAspRS_like_N"/>
    <property type="match status" value="1"/>
</dbReference>
<dbReference type="Gene3D" id="3.30.930.10">
    <property type="entry name" value="Bira Bifunctional Protein, Domain 2"/>
    <property type="match status" value="1"/>
</dbReference>
<dbReference type="Gene3D" id="3.30.1360.30">
    <property type="entry name" value="GAD-like domain"/>
    <property type="match status" value="1"/>
</dbReference>
<dbReference type="Gene3D" id="2.40.50.140">
    <property type="entry name" value="Nucleic acid-binding proteins"/>
    <property type="match status" value="1"/>
</dbReference>
<dbReference type="HAMAP" id="MF_00044">
    <property type="entry name" value="Asp_tRNA_synth_type1"/>
    <property type="match status" value="1"/>
</dbReference>
<dbReference type="InterPro" id="IPR004364">
    <property type="entry name" value="Aa-tRNA-synt_II"/>
</dbReference>
<dbReference type="InterPro" id="IPR006195">
    <property type="entry name" value="aa-tRNA-synth_II"/>
</dbReference>
<dbReference type="InterPro" id="IPR045864">
    <property type="entry name" value="aa-tRNA-synth_II/BPL/LPL"/>
</dbReference>
<dbReference type="InterPro" id="IPR004524">
    <property type="entry name" value="Asp-tRNA-ligase_1"/>
</dbReference>
<dbReference type="InterPro" id="IPR047089">
    <property type="entry name" value="Asp-tRNA-ligase_1_N"/>
</dbReference>
<dbReference type="InterPro" id="IPR002312">
    <property type="entry name" value="Asp/Asn-tRNA-synth_IIb"/>
</dbReference>
<dbReference type="InterPro" id="IPR047090">
    <property type="entry name" value="AspRS_core"/>
</dbReference>
<dbReference type="InterPro" id="IPR004115">
    <property type="entry name" value="GAD-like_sf"/>
</dbReference>
<dbReference type="InterPro" id="IPR029351">
    <property type="entry name" value="GAD_dom"/>
</dbReference>
<dbReference type="InterPro" id="IPR012340">
    <property type="entry name" value="NA-bd_OB-fold"/>
</dbReference>
<dbReference type="InterPro" id="IPR004365">
    <property type="entry name" value="NA-bd_OB_tRNA"/>
</dbReference>
<dbReference type="NCBIfam" id="TIGR00459">
    <property type="entry name" value="aspS_bact"/>
    <property type="match status" value="1"/>
</dbReference>
<dbReference type="NCBIfam" id="NF001750">
    <property type="entry name" value="PRK00476.1"/>
    <property type="match status" value="1"/>
</dbReference>
<dbReference type="PANTHER" id="PTHR22594:SF5">
    <property type="entry name" value="ASPARTATE--TRNA LIGASE, MITOCHONDRIAL"/>
    <property type="match status" value="1"/>
</dbReference>
<dbReference type="PANTHER" id="PTHR22594">
    <property type="entry name" value="ASPARTYL/LYSYL-TRNA SYNTHETASE"/>
    <property type="match status" value="1"/>
</dbReference>
<dbReference type="Pfam" id="PF02938">
    <property type="entry name" value="GAD"/>
    <property type="match status" value="1"/>
</dbReference>
<dbReference type="Pfam" id="PF00152">
    <property type="entry name" value="tRNA-synt_2"/>
    <property type="match status" value="1"/>
</dbReference>
<dbReference type="Pfam" id="PF01336">
    <property type="entry name" value="tRNA_anti-codon"/>
    <property type="match status" value="1"/>
</dbReference>
<dbReference type="PRINTS" id="PR01042">
    <property type="entry name" value="TRNASYNTHASP"/>
</dbReference>
<dbReference type="SUPFAM" id="SSF55681">
    <property type="entry name" value="Class II aaRS and biotin synthetases"/>
    <property type="match status" value="1"/>
</dbReference>
<dbReference type="SUPFAM" id="SSF55261">
    <property type="entry name" value="GAD domain-like"/>
    <property type="match status" value="1"/>
</dbReference>
<dbReference type="SUPFAM" id="SSF50249">
    <property type="entry name" value="Nucleic acid-binding proteins"/>
    <property type="match status" value="1"/>
</dbReference>
<dbReference type="PROSITE" id="PS50862">
    <property type="entry name" value="AA_TRNA_LIGASE_II"/>
    <property type="match status" value="1"/>
</dbReference>
<gene>
    <name evidence="1" type="primary">aspS</name>
    <name type="ordered locus">Xfasm12_1108</name>
</gene>
<proteinExistence type="inferred from homology"/>
<sequence>MRTHFCGLINETLIGHTVTLAGWTDVARNLGGVCFIDLRDHEGIVQITVDSRAIDQNNSELFKVASGLSYEDVLQVEGVVCARHAVNDKIKTGKVEVIATKIKILNKAAPLPFHAHENPGEDIRLKYRYLDLRRPEMQRMQRTRIKLVQALRRHLDMHGFQDIETPILTKATPEGARDFLVPARMHPGEFYALPQSPQLFKQILMVAGFDRYYQIARCFRDEALRADRQLEFTQLDMEFAFVSERDVQDFVEEMIRRVFKEVAGIELDTTFPRMTWKEAMRRFGSDKPDLRINLELIDVAALVADSTFTPFTDAVAHPNGRVAALRIPSGTVLSRKQIDEYAAYTAKYGATGLAYAKLAPTGEITSPIAKFFSEDAFASLLSHIGAEKGDIVFFGAGNYNKVSDFMSALRLKAGKDFALITADWRPLWVTDFPMFEWDEEAQRYVALHHPFTAPAAIDDIDELRAHARTALSRGYDMVLNGNEIGGGSIRIHRPEMQRAVFELLGITEDEARAKFGFLLDALNYGAPPHGGIAFGIDRIAALIAGTESIRDVIPFPKTTGAQCLMTDAPSPISEEQLSEIHVITKKTTP</sequence>
<evidence type="ECO:0000255" key="1">
    <source>
        <dbReference type="HAMAP-Rule" id="MF_00044"/>
    </source>
</evidence>